<sequence>MKALILVGGFGTRLRPLTLSLPKPLVDFANKPMILHQIEALKAIGVDEVVLAINYEPEQLLVMSKFSNDVEATLGIKITCSQETEPLGTAGPLALARDKLVDGSGQPFFVLNSDVISDYPLEEMIAFHNAHGGEASIMVTKVDEPSKYGVVVMEEATGRVERFVEKPKLFVGNKINAGIYLLNPSVLDRIELRPTSIEKEIFPQIAEAEKLYAMLLPGFWMDIGQPRDYITGLRLYLDSLRKKSPSKLATGPHILGNVLVDETAEIGEGCLIGPNVAIGPGCVVESGVRLSHCTVMRGVHVKRYACISSSIIGWHSTVGQWARVENMSILGKNVYVCDEIYCNGGVVLHNKEIKSDILKPDIVM</sequence>
<keyword id="KW-0342">GTP-binding</keyword>
<keyword id="KW-0547">Nucleotide-binding</keyword>
<keyword id="KW-0548">Nucleotidyltransferase</keyword>
<keyword id="KW-1185">Reference proteome</keyword>
<keyword id="KW-0808">Transferase</keyword>
<feature type="chain" id="PRO_0000412466" description="Probable mannose-1-phosphate guanylyltransferase 2">
    <location>
        <begin position="1"/>
        <end position="364"/>
    </location>
</feature>
<feature type="binding site" evidence="2">
    <location>
        <position position="6"/>
    </location>
    <ligand>
        <name>GDP-alpha-D-mannose</name>
        <dbReference type="ChEBI" id="CHEBI:57527"/>
    </ligand>
</feature>
<feature type="binding site" evidence="2">
    <location>
        <position position="7"/>
    </location>
    <ligand>
        <name>GDP-alpha-D-mannose</name>
        <dbReference type="ChEBI" id="CHEBI:57527"/>
    </ligand>
</feature>
<feature type="binding site" evidence="2">
    <location>
        <position position="9"/>
    </location>
    <ligand>
        <name>diphosphate</name>
        <dbReference type="ChEBI" id="CHEBI:33019"/>
    </ligand>
</feature>
<feature type="binding site" evidence="2">
    <location>
        <position position="11"/>
    </location>
    <ligand>
        <name>diphosphate</name>
        <dbReference type="ChEBI" id="CHEBI:33019"/>
    </ligand>
</feature>
<feature type="binding site" evidence="2">
    <location>
        <position position="12"/>
    </location>
    <ligand>
        <name>diphosphate</name>
        <dbReference type="ChEBI" id="CHEBI:33019"/>
    </ligand>
</feature>
<feature type="binding site" evidence="2">
    <location>
        <position position="13"/>
    </location>
    <ligand>
        <name>diphosphate</name>
        <dbReference type="ChEBI" id="CHEBI:33019"/>
    </ligand>
</feature>
<feature type="binding site" evidence="2">
    <location>
        <position position="23"/>
    </location>
    <ligand>
        <name>diphosphate</name>
        <dbReference type="ChEBI" id="CHEBI:33019"/>
    </ligand>
</feature>
<feature type="binding site" evidence="2">
    <location>
        <position position="88"/>
    </location>
    <ligand>
        <name>GDP-alpha-D-mannose</name>
        <dbReference type="ChEBI" id="CHEBI:57527"/>
    </ligand>
</feature>
<feature type="binding site" evidence="2">
    <location>
        <position position="112"/>
    </location>
    <ligand>
        <name>GDP-alpha-D-mannose</name>
        <dbReference type="ChEBI" id="CHEBI:57527"/>
    </ligand>
</feature>
<feature type="binding site" evidence="2">
    <location>
        <position position="114"/>
    </location>
    <ligand>
        <name>GDP-alpha-D-mannose</name>
        <dbReference type="ChEBI" id="CHEBI:57527"/>
    </ligand>
</feature>
<feature type="binding site" evidence="2">
    <location>
        <position position="149"/>
    </location>
    <ligand>
        <name>GDP-alpha-D-mannose</name>
        <dbReference type="ChEBI" id="CHEBI:57527"/>
    </ligand>
</feature>
<feature type="binding site" evidence="2">
    <location>
        <position position="176"/>
    </location>
    <ligand>
        <name>GDP-alpha-D-mannose</name>
        <dbReference type="ChEBI" id="CHEBI:57527"/>
    </ligand>
</feature>
<organism>
    <name type="scientific">Arabidopsis thaliana</name>
    <name type="common">Mouse-ear cress</name>
    <dbReference type="NCBI Taxonomy" id="3702"/>
    <lineage>
        <taxon>Eukaryota</taxon>
        <taxon>Viridiplantae</taxon>
        <taxon>Streptophyta</taxon>
        <taxon>Embryophyta</taxon>
        <taxon>Tracheophyta</taxon>
        <taxon>Spermatophyta</taxon>
        <taxon>Magnoliopsida</taxon>
        <taxon>eudicotyledons</taxon>
        <taxon>Gunneridae</taxon>
        <taxon>Pentapetalae</taxon>
        <taxon>rosids</taxon>
        <taxon>malvids</taxon>
        <taxon>Brassicales</taxon>
        <taxon>Brassicaceae</taxon>
        <taxon>Camelineae</taxon>
        <taxon>Arabidopsis</taxon>
    </lineage>
</organism>
<dbReference type="EC" id="2.7.7.13"/>
<dbReference type="EMBL" id="AL132975">
    <property type="protein sequence ID" value="CAB75917.1"/>
    <property type="molecule type" value="Genomic_DNA"/>
</dbReference>
<dbReference type="EMBL" id="CP002686">
    <property type="protein sequence ID" value="AEE79405.1"/>
    <property type="molecule type" value="Genomic_DNA"/>
</dbReference>
<dbReference type="EMBL" id="DQ056626">
    <property type="protein sequence ID" value="AAY78774.1"/>
    <property type="molecule type" value="mRNA"/>
</dbReference>
<dbReference type="PIR" id="T47698">
    <property type="entry name" value="T47698"/>
</dbReference>
<dbReference type="RefSeq" id="NP_191118.1">
    <property type="nucleotide sequence ID" value="NM_115416.2"/>
</dbReference>
<dbReference type="SMR" id="Q9M2S0"/>
<dbReference type="FunCoup" id="Q9M2S0">
    <property type="interactions" value="2670"/>
</dbReference>
<dbReference type="STRING" id="3702.Q9M2S0"/>
<dbReference type="PaxDb" id="3702-AT3G55590.1"/>
<dbReference type="ProteomicsDB" id="247006"/>
<dbReference type="EnsemblPlants" id="AT3G55590.1">
    <property type="protein sequence ID" value="AT3G55590.1"/>
    <property type="gene ID" value="AT3G55590"/>
</dbReference>
<dbReference type="GeneID" id="824724"/>
<dbReference type="Gramene" id="AT3G55590.1">
    <property type="protein sequence ID" value="AT3G55590.1"/>
    <property type="gene ID" value="AT3G55590"/>
</dbReference>
<dbReference type="KEGG" id="ath:AT3G55590"/>
<dbReference type="Araport" id="AT3G55590"/>
<dbReference type="TAIR" id="AT3G55590"/>
<dbReference type="eggNOG" id="KOG1322">
    <property type="taxonomic scope" value="Eukaryota"/>
</dbReference>
<dbReference type="HOGENOM" id="CLU_029499_0_0_1"/>
<dbReference type="InParanoid" id="Q9M2S0"/>
<dbReference type="OrthoDB" id="1733332at2759"/>
<dbReference type="PhylomeDB" id="Q9M2S0"/>
<dbReference type="BioCyc" id="ARA:AT3G55590-MONOMER"/>
<dbReference type="BRENDA" id="2.7.7.13">
    <property type="organism ID" value="399"/>
</dbReference>
<dbReference type="UniPathway" id="UPA00126">
    <property type="reaction ID" value="UER00930"/>
</dbReference>
<dbReference type="PRO" id="PR:Q9M2S0"/>
<dbReference type="Proteomes" id="UP000006548">
    <property type="component" value="Chromosome 3"/>
</dbReference>
<dbReference type="ExpressionAtlas" id="Q9M2S0">
    <property type="expression patterns" value="baseline and differential"/>
</dbReference>
<dbReference type="GO" id="GO:0005737">
    <property type="term" value="C:cytoplasm"/>
    <property type="evidence" value="ECO:0007669"/>
    <property type="project" value="UniProtKB-ARBA"/>
</dbReference>
<dbReference type="GO" id="GO:0005525">
    <property type="term" value="F:GTP binding"/>
    <property type="evidence" value="ECO:0007669"/>
    <property type="project" value="UniProtKB-KW"/>
</dbReference>
<dbReference type="GO" id="GO:0004475">
    <property type="term" value="F:mannose-1-phosphate guanylyltransferase (GTP) activity"/>
    <property type="evidence" value="ECO:0007669"/>
    <property type="project" value="UniProtKB-EC"/>
</dbReference>
<dbReference type="GO" id="GO:0009298">
    <property type="term" value="P:GDP-mannose biosynthetic process"/>
    <property type="evidence" value="ECO:0007669"/>
    <property type="project" value="UniProtKB-UniPathway"/>
</dbReference>
<dbReference type="CDD" id="cd06425">
    <property type="entry name" value="M1P_guanylylT_B_like_N"/>
    <property type="match status" value="1"/>
</dbReference>
<dbReference type="FunFam" id="3.90.550.10:FF:000013">
    <property type="entry name" value="mannose-1-phosphate guanyltransferase beta"/>
    <property type="match status" value="1"/>
</dbReference>
<dbReference type="Gene3D" id="2.160.10.10">
    <property type="entry name" value="Hexapeptide repeat proteins"/>
    <property type="match status" value="1"/>
</dbReference>
<dbReference type="Gene3D" id="3.90.550.10">
    <property type="entry name" value="Spore Coat Polysaccharide Biosynthesis Protein SpsA, Chain A"/>
    <property type="match status" value="1"/>
</dbReference>
<dbReference type="InterPro" id="IPR056729">
    <property type="entry name" value="GMPPB_C"/>
</dbReference>
<dbReference type="InterPro" id="IPR045233">
    <property type="entry name" value="GMPPB_N"/>
</dbReference>
<dbReference type="InterPro" id="IPR050486">
    <property type="entry name" value="Mannose-1P_guanyltransferase"/>
</dbReference>
<dbReference type="InterPro" id="IPR005835">
    <property type="entry name" value="NTP_transferase_dom"/>
</dbReference>
<dbReference type="InterPro" id="IPR029044">
    <property type="entry name" value="Nucleotide-diphossugar_trans"/>
</dbReference>
<dbReference type="PANTHER" id="PTHR22572">
    <property type="entry name" value="SUGAR-1-PHOSPHATE GUANYL TRANSFERASE"/>
    <property type="match status" value="1"/>
</dbReference>
<dbReference type="Pfam" id="PF25087">
    <property type="entry name" value="GMPPB_C"/>
    <property type="match status" value="1"/>
</dbReference>
<dbReference type="Pfam" id="PF00483">
    <property type="entry name" value="NTP_transferase"/>
    <property type="match status" value="1"/>
</dbReference>
<dbReference type="SUPFAM" id="SSF53448">
    <property type="entry name" value="Nucleotide-diphospho-sugar transferases"/>
    <property type="match status" value="1"/>
</dbReference>
<dbReference type="PROSITE" id="PS00101">
    <property type="entry name" value="HEXAPEP_TRANSFERASES"/>
    <property type="match status" value="1"/>
</dbReference>
<proteinExistence type="evidence at transcript level"/>
<reference key="1">
    <citation type="journal article" date="2000" name="Nature">
        <title>Sequence and analysis of chromosome 3 of the plant Arabidopsis thaliana.</title>
        <authorList>
            <person name="Salanoubat M."/>
            <person name="Lemcke K."/>
            <person name="Rieger M."/>
            <person name="Ansorge W."/>
            <person name="Unseld M."/>
            <person name="Fartmann B."/>
            <person name="Valle G."/>
            <person name="Bloecker H."/>
            <person name="Perez-Alonso M."/>
            <person name="Obermaier B."/>
            <person name="Delseny M."/>
            <person name="Boutry M."/>
            <person name="Grivell L.A."/>
            <person name="Mache R."/>
            <person name="Puigdomenech P."/>
            <person name="De Simone V."/>
            <person name="Choisne N."/>
            <person name="Artiguenave F."/>
            <person name="Robert C."/>
            <person name="Brottier P."/>
            <person name="Wincker P."/>
            <person name="Cattolico L."/>
            <person name="Weissenbach J."/>
            <person name="Saurin W."/>
            <person name="Quetier F."/>
            <person name="Schaefer M."/>
            <person name="Mueller-Auer S."/>
            <person name="Gabel C."/>
            <person name="Fuchs M."/>
            <person name="Benes V."/>
            <person name="Wurmbach E."/>
            <person name="Drzonek H."/>
            <person name="Erfle H."/>
            <person name="Jordan N."/>
            <person name="Bangert S."/>
            <person name="Wiedelmann R."/>
            <person name="Kranz H."/>
            <person name="Voss H."/>
            <person name="Holland R."/>
            <person name="Brandt P."/>
            <person name="Nyakatura G."/>
            <person name="Vezzi A."/>
            <person name="D'Angelo M."/>
            <person name="Pallavicini A."/>
            <person name="Toppo S."/>
            <person name="Simionati B."/>
            <person name="Conrad A."/>
            <person name="Hornischer K."/>
            <person name="Kauer G."/>
            <person name="Loehnert T.-H."/>
            <person name="Nordsiek G."/>
            <person name="Reichelt J."/>
            <person name="Scharfe M."/>
            <person name="Schoen O."/>
            <person name="Bargues M."/>
            <person name="Terol J."/>
            <person name="Climent J."/>
            <person name="Navarro P."/>
            <person name="Collado C."/>
            <person name="Perez-Perez A."/>
            <person name="Ottenwaelder B."/>
            <person name="Duchemin D."/>
            <person name="Cooke R."/>
            <person name="Laudie M."/>
            <person name="Berger-Llauro C."/>
            <person name="Purnelle B."/>
            <person name="Masuy D."/>
            <person name="de Haan M."/>
            <person name="Maarse A.C."/>
            <person name="Alcaraz J.-P."/>
            <person name="Cottet A."/>
            <person name="Casacuberta E."/>
            <person name="Monfort A."/>
            <person name="Argiriou A."/>
            <person name="Flores M."/>
            <person name="Liguori R."/>
            <person name="Vitale D."/>
            <person name="Mannhaupt G."/>
            <person name="Haase D."/>
            <person name="Schoof H."/>
            <person name="Rudd S."/>
            <person name="Zaccaria P."/>
            <person name="Mewes H.-W."/>
            <person name="Mayer K.F.X."/>
            <person name="Kaul S."/>
            <person name="Town C.D."/>
            <person name="Koo H.L."/>
            <person name="Tallon L.J."/>
            <person name="Jenkins J."/>
            <person name="Rooney T."/>
            <person name="Rizzo M."/>
            <person name="Walts A."/>
            <person name="Utterback T."/>
            <person name="Fujii C.Y."/>
            <person name="Shea T.P."/>
            <person name="Creasy T.H."/>
            <person name="Haas B."/>
            <person name="Maiti R."/>
            <person name="Wu D."/>
            <person name="Peterson J."/>
            <person name="Van Aken S."/>
            <person name="Pai G."/>
            <person name="Militscher J."/>
            <person name="Sellers P."/>
            <person name="Gill J.E."/>
            <person name="Feldblyum T.V."/>
            <person name="Preuss D."/>
            <person name="Lin X."/>
            <person name="Nierman W.C."/>
            <person name="Salzberg S.L."/>
            <person name="White O."/>
            <person name="Venter J.C."/>
            <person name="Fraser C.M."/>
            <person name="Kaneko T."/>
            <person name="Nakamura Y."/>
            <person name="Sato S."/>
            <person name="Kato T."/>
            <person name="Asamizu E."/>
            <person name="Sasamoto S."/>
            <person name="Kimura T."/>
            <person name="Idesawa K."/>
            <person name="Kawashima K."/>
            <person name="Kishida Y."/>
            <person name="Kiyokawa C."/>
            <person name="Kohara M."/>
            <person name="Matsumoto M."/>
            <person name="Matsuno A."/>
            <person name="Muraki A."/>
            <person name="Nakayama S."/>
            <person name="Nakazaki N."/>
            <person name="Shinpo S."/>
            <person name="Takeuchi C."/>
            <person name="Wada T."/>
            <person name="Watanabe A."/>
            <person name="Yamada M."/>
            <person name="Yasuda M."/>
            <person name="Tabata S."/>
        </authorList>
    </citation>
    <scope>NUCLEOTIDE SEQUENCE [LARGE SCALE GENOMIC DNA]</scope>
    <source>
        <strain>cv. Columbia</strain>
    </source>
</reference>
<reference key="2">
    <citation type="journal article" date="2017" name="Plant J.">
        <title>Araport11: a complete reannotation of the Arabidopsis thaliana reference genome.</title>
        <authorList>
            <person name="Cheng C.Y."/>
            <person name="Krishnakumar V."/>
            <person name="Chan A.P."/>
            <person name="Thibaud-Nissen F."/>
            <person name="Schobel S."/>
            <person name="Town C.D."/>
        </authorList>
    </citation>
    <scope>GENOME REANNOTATION</scope>
    <source>
        <strain>cv. Columbia</strain>
    </source>
</reference>
<reference key="3">
    <citation type="submission" date="2005-05" db="EMBL/GenBank/DDBJ databases">
        <authorList>
            <person name="Underwood B.A."/>
            <person name="Xiao Y.-L."/>
            <person name="Moskal W.A. Jr."/>
            <person name="Monaghan E.L."/>
            <person name="Wang W."/>
            <person name="Redman J.C."/>
            <person name="Wu H.C."/>
            <person name="Utterback T."/>
            <person name="Town C.D."/>
        </authorList>
    </citation>
    <scope>NUCLEOTIDE SEQUENCE [LARGE SCALE MRNA]</scope>
    <source>
        <strain>cv. Columbia</strain>
    </source>
</reference>
<comment type="function">
    <text evidence="1">Catalyzes a reaction of the Smirnoff-Wheeler pathway, the major route to ascorbate biosynthesis in plants.</text>
</comment>
<comment type="catalytic activity">
    <reaction>
        <text>alpha-D-mannose 1-phosphate + GTP + H(+) = GDP-alpha-D-mannose + diphosphate</text>
        <dbReference type="Rhea" id="RHEA:15229"/>
        <dbReference type="ChEBI" id="CHEBI:15378"/>
        <dbReference type="ChEBI" id="CHEBI:33019"/>
        <dbReference type="ChEBI" id="CHEBI:37565"/>
        <dbReference type="ChEBI" id="CHEBI:57527"/>
        <dbReference type="ChEBI" id="CHEBI:58409"/>
        <dbReference type="EC" id="2.7.7.13"/>
    </reaction>
</comment>
<comment type="pathway">
    <text>Nucleotide-sugar biosynthesis; GDP-alpha-D-mannose biosynthesis; GDP-alpha-D-mannose from alpha-D-mannose 1-phosphate (GTP route): step 1/1.</text>
</comment>
<comment type="similarity">
    <text evidence="3">Belongs to the transferase hexapeptide repeat family.</text>
</comment>
<gene>
    <name type="ordered locus">At3g55590</name>
    <name type="ORF">T22E16.250</name>
</gene>
<name>GMPP2_ARATH</name>
<protein>
    <recommendedName>
        <fullName>Probable mannose-1-phosphate guanylyltransferase 2</fullName>
        <ecNumber>2.7.7.13</ecNumber>
    </recommendedName>
</protein>
<evidence type="ECO:0000250" key="1"/>
<evidence type="ECO:0000250" key="2">
    <source>
        <dbReference type="UniProtKB" id="O22287"/>
    </source>
</evidence>
<evidence type="ECO:0000305" key="3"/>
<accession>Q9M2S0</accession>